<feature type="chain" id="PRO_1000132013" description="UPF0270 protein YheU">
    <location>
        <begin position="1"/>
        <end position="72"/>
    </location>
</feature>
<accession>B1LHF5</accession>
<gene>
    <name evidence="1" type="primary">yheU</name>
    <name type="ordered locus">EcSMS35_3636</name>
</gene>
<evidence type="ECO:0000255" key="1">
    <source>
        <dbReference type="HAMAP-Rule" id="MF_00690"/>
    </source>
</evidence>
<organism>
    <name type="scientific">Escherichia coli (strain SMS-3-5 / SECEC)</name>
    <dbReference type="NCBI Taxonomy" id="439855"/>
    <lineage>
        <taxon>Bacteria</taxon>
        <taxon>Pseudomonadati</taxon>
        <taxon>Pseudomonadota</taxon>
        <taxon>Gammaproteobacteria</taxon>
        <taxon>Enterobacterales</taxon>
        <taxon>Enterobacteriaceae</taxon>
        <taxon>Escherichia</taxon>
    </lineage>
</organism>
<proteinExistence type="inferred from homology"/>
<reference key="1">
    <citation type="journal article" date="2008" name="J. Bacteriol.">
        <title>Insights into the environmental resistance gene pool from the genome sequence of the multidrug-resistant environmental isolate Escherichia coli SMS-3-5.</title>
        <authorList>
            <person name="Fricke W.F."/>
            <person name="Wright M.S."/>
            <person name="Lindell A.H."/>
            <person name="Harkins D.M."/>
            <person name="Baker-Austin C."/>
            <person name="Ravel J."/>
            <person name="Stepanauskas R."/>
        </authorList>
    </citation>
    <scope>NUCLEOTIDE SEQUENCE [LARGE SCALE GENOMIC DNA]</scope>
    <source>
        <strain>SMS-3-5 / SECEC</strain>
    </source>
</reference>
<name>YHEU_ECOSM</name>
<sequence>MLIPWQDLSPETLENLIESFVLREGTDYGEHERTLEQKVADVKRQLQCGEAVLVWSELHETVNIMPRSQFRE</sequence>
<comment type="similarity">
    <text evidence="1">Belongs to the UPF0270 family.</text>
</comment>
<dbReference type="EMBL" id="CP000970">
    <property type="protein sequence ID" value="ACB19328.1"/>
    <property type="molecule type" value="Genomic_DNA"/>
</dbReference>
<dbReference type="RefSeq" id="WP_000907085.1">
    <property type="nucleotide sequence ID" value="NC_010498.1"/>
</dbReference>
<dbReference type="SMR" id="B1LHF5"/>
<dbReference type="KEGG" id="ecm:EcSMS35_3636"/>
<dbReference type="HOGENOM" id="CLU_186759_1_0_6"/>
<dbReference type="Proteomes" id="UP000007011">
    <property type="component" value="Chromosome"/>
</dbReference>
<dbReference type="Gene3D" id="1.10.10.610">
    <property type="entry name" value="YehU-like"/>
    <property type="match status" value="1"/>
</dbReference>
<dbReference type="HAMAP" id="MF_00690">
    <property type="entry name" value="UPF0270"/>
    <property type="match status" value="1"/>
</dbReference>
<dbReference type="InterPro" id="IPR010648">
    <property type="entry name" value="UPF0270"/>
</dbReference>
<dbReference type="InterPro" id="IPR036685">
    <property type="entry name" value="YehU-like_sf"/>
</dbReference>
<dbReference type="NCBIfam" id="NF003438">
    <property type="entry name" value="PRK04966.1"/>
    <property type="match status" value="1"/>
</dbReference>
<dbReference type="Pfam" id="PF06794">
    <property type="entry name" value="UPF0270"/>
    <property type="match status" value="1"/>
</dbReference>
<dbReference type="PIRSF" id="PIRSF006169">
    <property type="entry name" value="UCP006169"/>
    <property type="match status" value="1"/>
</dbReference>
<dbReference type="SUPFAM" id="SSF118001">
    <property type="entry name" value="YehU-like"/>
    <property type="match status" value="1"/>
</dbReference>
<protein>
    <recommendedName>
        <fullName evidence="1">UPF0270 protein YheU</fullName>
    </recommendedName>
</protein>